<evidence type="ECO:0000255" key="1">
    <source>
        <dbReference type="HAMAP-Rule" id="MF_00143"/>
    </source>
</evidence>
<feature type="chain" id="PRO_1000203295" description="UPF0114 protein PC1_0431">
    <location>
        <begin position="1"/>
        <end position="168"/>
    </location>
</feature>
<feature type="transmembrane region" description="Helical" evidence="1">
    <location>
        <begin position="15"/>
        <end position="35"/>
    </location>
</feature>
<feature type="transmembrane region" description="Helical" evidence="1">
    <location>
        <begin position="53"/>
        <end position="73"/>
    </location>
</feature>
<feature type="transmembrane region" description="Helical" evidence="1">
    <location>
        <begin position="136"/>
        <end position="156"/>
    </location>
</feature>
<name>Y431_PECCP</name>
<proteinExistence type="inferred from homology"/>
<organism>
    <name type="scientific">Pectobacterium carotovorum subsp. carotovorum (strain PC1)</name>
    <dbReference type="NCBI Taxonomy" id="561230"/>
    <lineage>
        <taxon>Bacteria</taxon>
        <taxon>Pseudomonadati</taxon>
        <taxon>Pseudomonadota</taxon>
        <taxon>Gammaproteobacteria</taxon>
        <taxon>Enterobacterales</taxon>
        <taxon>Pectobacteriaceae</taxon>
        <taxon>Pectobacterium</taxon>
    </lineage>
</organism>
<protein>
    <recommendedName>
        <fullName evidence="1">UPF0114 protein PC1_0431</fullName>
    </recommendedName>
</protein>
<sequence length="168" mass="18947">MERFIENLMYTSRWLLAPVYLGLSLGLLALAIKFFQEVFHVLPNIFDIAEADLVLVLLSLIDMTLVGGLLVMVMLSGYENFVSALDITDGREKLNWLGKMDSGSLKNKVAASIVAISSIHLLRVFMDARNIPDNKLMWYVIIHLTFVLSALVMGYLDRMSRYEKSKAA</sequence>
<gene>
    <name type="ordered locus">PC1_0431</name>
</gene>
<reference key="1">
    <citation type="submission" date="2009-07" db="EMBL/GenBank/DDBJ databases">
        <title>Complete sequence of Pectobacterium carotovorum subsp. carotovorum PC1.</title>
        <authorList>
            <consortium name="US DOE Joint Genome Institute"/>
            <person name="Lucas S."/>
            <person name="Copeland A."/>
            <person name="Lapidus A."/>
            <person name="Glavina del Rio T."/>
            <person name="Tice H."/>
            <person name="Bruce D."/>
            <person name="Goodwin L."/>
            <person name="Pitluck S."/>
            <person name="Munk A.C."/>
            <person name="Brettin T."/>
            <person name="Detter J.C."/>
            <person name="Han C."/>
            <person name="Tapia R."/>
            <person name="Larimer F."/>
            <person name="Land M."/>
            <person name="Hauser L."/>
            <person name="Kyrpides N."/>
            <person name="Mikhailova N."/>
            <person name="Balakrishnan V."/>
            <person name="Glasner J."/>
            <person name="Perna N.T."/>
        </authorList>
    </citation>
    <scope>NUCLEOTIDE SEQUENCE [LARGE SCALE GENOMIC DNA]</scope>
    <source>
        <strain>PC1</strain>
    </source>
</reference>
<dbReference type="EMBL" id="CP001657">
    <property type="protein sequence ID" value="ACT11487.1"/>
    <property type="molecule type" value="Genomic_DNA"/>
</dbReference>
<dbReference type="RefSeq" id="WP_012773142.1">
    <property type="nucleotide sequence ID" value="NC_012917.1"/>
</dbReference>
<dbReference type="KEGG" id="pct:PC1_0431"/>
<dbReference type="eggNOG" id="COG2862">
    <property type="taxonomic scope" value="Bacteria"/>
</dbReference>
<dbReference type="HOGENOM" id="CLU_097887_1_0_6"/>
<dbReference type="OrthoDB" id="9783569at2"/>
<dbReference type="Proteomes" id="UP000002736">
    <property type="component" value="Chromosome"/>
</dbReference>
<dbReference type="GO" id="GO:0005886">
    <property type="term" value="C:plasma membrane"/>
    <property type="evidence" value="ECO:0007669"/>
    <property type="project" value="UniProtKB-SubCell"/>
</dbReference>
<dbReference type="HAMAP" id="MF_00143">
    <property type="entry name" value="UPF0114"/>
    <property type="match status" value="1"/>
</dbReference>
<dbReference type="InterPro" id="IPR005134">
    <property type="entry name" value="UPF0114"/>
</dbReference>
<dbReference type="InterPro" id="IPR020761">
    <property type="entry name" value="UPF0114_bac"/>
</dbReference>
<dbReference type="NCBIfam" id="TIGR00645">
    <property type="entry name" value="HI0507"/>
    <property type="match status" value="1"/>
</dbReference>
<dbReference type="PANTHER" id="PTHR38596">
    <property type="entry name" value="UPF0114 PROTEIN YQHA"/>
    <property type="match status" value="1"/>
</dbReference>
<dbReference type="PANTHER" id="PTHR38596:SF1">
    <property type="entry name" value="UPF0114 PROTEIN YQHA"/>
    <property type="match status" value="1"/>
</dbReference>
<dbReference type="Pfam" id="PF03350">
    <property type="entry name" value="UPF0114"/>
    <property type="match status" value="1"/>
</dbReference>
<keyword id="KW-1003">Cell membrane</keyword>
<keyword id="KW-0472">Membrane</keyword>
<keyword id="KW-0812">Transmembrane</keyword>
<keyword id="KW-1133">Transmembrane helix</keyword>
<comment type="subcellular location">
    <subcellularLocation>
        <location evidence="1">Cell membrane</location>
        <topology evidence="1">Multi-pass membrane protein</topology>
    </subcellularLocation>
</comment>
<comment type="similarity">
    <text evidence="1">Belongs to the UPF0114 family.</text>
</comment>
<accession>C6DJS4</accession>